<evidence type="ECO:0000255" key="1">
    <source>
        <dbReference type="HAMAP-Rule" id="MF_00199"/>
    </source>
</evidence>
<protein>
    <recommendedName>
        <fullName evidence="1">Bis(5'-nucleosyl)-tetraphosphatase, symmetrical</fullName>
        <ecNumber evidence="1">3.6.1.41</ecNumber>
    </recommendedName>
    <alternativeName>
        <fullName evidence="1">Ap4A hydrolase</fullName>
    </alternativeName>
    <alternativeName>
        <fullName evidence="1">Diadenosine 5',5'''-P1,P4-tetraphosphate pyrophosphohydrolase</fullName>
    </alternativeName>
    <alternativeName>
        <fullName evidence="1">Diadenosine tetraphosphatase</fullName>
    </alternativeName>
</protein>
<proteinExistence type="inferred from homology"/>
<comment type="function">
    <text evidence="1">Hydrolyzes diadenosine 5',5'''-P1,P4-tetraphosphate to yield ADP.</text>
</comment>
<comment type="catalytic activity">
    <reaction evidence="1">
        <text>P(1),P(4)-bis(5'-adenosyl) tetraphosphate + H2O = 2 ADP + 2 H(+)</text>
        <dbReference type="Rhea" id="RHEA:24252"/>
        <dbReference type="ChEBI" id="CHEBI:15377"/>
        <dbReference type="ChEBI" id="CHEBI:15378"/>
        <dbReference type="ChEBI" id="CHEBI:58141"/>
        <dbReference type="ChEBI" id="CHEBI:456216"/>
        <dbReference type="EC" id="3.6.1.41"/>
    </reaction>
</comment>
<comment type="similarity">
    <text evidence="1">Belongs to the Ap4A hydrolase family.</text>
</comment>
<dbReference type="EC" id="3.6.1.41" evidence="1"/>
<dbReference type="EMBL" id="AM286415">
    <property type="protein sequence ID" value="CAL10740.1"/>
    <property type="molecule type" value="Genomic_DNA"/>
</dbReference>
<dbReference type="RefSeq" id="WP_011815544.1">
    <property type="nucleotide sequence ID" value="NC_008800.1"/>
</dbReference>
<dbReference type="RefSeq" id="YP_001004980.1">
    <property type="nucleotide sequence ID" value="NC_008800.1"/>
</dbReference>
<dbReference type="SMR" id="A1JJF2"/>
<dbReference type="KEGG" id="yen:YE0628"/>
<dbReference type="PATRIC" id="fig|393305.7.peg.721"/>
<dbReference type="eggNOG" id="COG0639">
    <property type="taxonomic scope" value="Bacteria"/>
</dbReference>
<dbReference type="HOGENOM" id="CLU_056184_2_0_6"/>
<dbReference type="OrthoDB" id="9807890at2"/>
<dbReference type="Proteomes" id="UP000000642">
    <property type="component" value="Chromosome"/>
</dbReference>
<dbReference type="GO" id="GO:0008803">
    <property type="term" value="F:bis(5'-nucleosyl)-tetraphosphatase (symmetrical) activity"/>
    <property type="evidence" value="ECO:0007669"/>
    <property type="project" value="UniProtKB-UniRule"/>
</dbReference>
<dbReference type="CDD" id="cd07422">
    <property type="entry name" value="MPP_ApaH"/>
    <property type="match status" value="1"/>
</dbReference>
<dbReference type="FunFam" id="3.60.21.10:FF:000013">
    <property type="entry name" value="Bis(5'-nucleosyl)-tetraphosphatase, symmetrical"/>
    <property type="match status" value="1"/>
</dbReference>
<dbReference type="Gene3D" id="3.60.21.10">
    <property type="match status" value="1"/>
</dbReference>
<dbReference type="HAMAP" id="MF_00199">
    <property type="entry name" value="ApaH"/>
    <property type="match status" value="1"/>
</dbReference>
<dbReference type="InterPro" id="IPR004617">
    <property type="entry name" value="ApaH"/>
</dbReference>
<dbReference type="InterPro" id="IPR004843">
    <property type="entry name" value="Calcineurin-like_PHP_ApaH"/>
</dbReference>
<dbReference type="InterPro" id="IPR029052">
    <property type="entry name" value="Metallo-depent_PP-like"/>
</dbReference>
<dbReference type="NCBIfam" id="TIGR00668">
    <property type="entry name" value="apaH"/>
    <property type="match status" value="1"/>
</dbReference>
<dbReference type="NCBIfam" id="NF001204">
    <property type="entry name" value="PRK00166.1"/>
    <property type="match status" value="1"/>
</dbReference>
<dbReference type="PANTHER" id="PTHR40942">
    <property type="match status" value="1"/>
</dbReference>
<dbReference type="PANTHER" id="PTHR40942:SF4">
    <property type="entry name" value="CYTOCHROME C5"/>
    <property type="match status" value="1"/>
</dbReference>
<dbReference type="Pfam" id="PF00149">
    <property type="entry name" value="Metallophos"/>
    <property type="match status" value="1"/>
</dbReference>
<dbReference type="PIRSF" id="PIRSF000903">
    <property type="entry name" value="B5n-ttraPtase_sm"/>
    <property type="match status" value="1"/>
</dbReference>
<dbReference type="SUPFAM" id="SSF56300">
    <property type="entry name" value="Metallo-dependent phosphatases"/>
    <property type="match status" value="1"/>
</dbReference>
<feature type="chain" id="PRO_1000012108" description="Bis(5'-nucleosyl)-tetraphosphatase, symmetrical">
    <location>
        <begin position="1"/>
        <end position="292"/>
    </location>
</feature>
<gene>
    <name evidence="1" type="primary">apaH</name>
    <name type="ordered locus">YE0628</name>
</gene>
<name>APAH_YERE8</name>
<accession>A1JJF2</accession>
<keyword id="KW-0378">Hydrolase</keyword>
<reference key="1">
    <citation type="journal article" date="2006" name="PLoS Genet.">
        <title>The complete genome sequence and comparative genome analysis of the high pathogenicity Yersinia enterocolitica strain 8081.</title>
        <authorList>
            <person name="Thomson N.R."/>
            <person name="Howard S."/>
            <person name="Wren B.W."/>
            <person name="Holden M.T.G."/>
            <person name="Crossman L."/>
            <person name="Challis G.L."/>
            <person name="Churcher C."/>
            <person name="Mungall K."/>
            <person name="Brooks K."/>
            <person name="Chillingworth T."/>
            <person name="Feltwell T."/>
            <person name="Abdellah Z."/>
            <person name="Hauser H."/>
            <person name="Jagels K."/>
            <person name="Maddison M."/>
            <person name="Moule S."/>
            <person name="Sanders M."/>
            <person name="Whitehead S."/>
            <person name="Quail M.A."/>
            <person name="Dougan G."/>
            <person name="Parkhill J."/>
            <person name="Prentice M.B."/>
        </authorList>
    </citation>
    <scope>NUCLEOTIDE SEQUENCE [LARGE SCALE GENOMIC DNA]</scope>
    <source>
        <strain>NCTC 13174 / 8081</strain>
    </source>
</reference>
<sequence length="292" mass="32690">MSTYLIGDVHGCLDELLALLAQVDFDPQHDTLWLTGDLVARGPASLDVLRYVRSLGPAVRMVLGNHDLHLLAVYAGISRNKPKDRITPLLEAPDADELINWLRRQPVLQVDDELKLIMAHAGITPQWDIETAQMCAREVESVLSSDSYPLFLDAMYGDMPNNWSPELTGLARLRFSTNALTRMRFCFPNGQLDMICKDTPENAPAPLKPWFELPRLVSPEYSIIFGHWASLEGKGVPEGIYGLDTGCCWGGNLTLLRWEDKRYFTQPAFKVEAEITNADEIAAAAKDPFSYL</sequence>
<organism>
    <name type="scientific">Yersinia enterocolitica serotype O:8 / biotype 1B (strain NCTC 13174 / 8081)</name>
    <dbReference type="NCBI Taxonomy" id="393305"/>
    <lineage>
        <taxon>Bacteria</taxon>
        <taxon>Pseudomonadati</taxon>
        <taxon>Pseudomonadota</taxon>
        <taxon>Gammaproteobacteria</taxon>
        <taxon>Enterobacterales</taxon>
        <taxon>Yersiniaceae</taxon>
        <taxon>Yersinia</taxon>
    </lineage>
</organism>